<proteinExistence type="inferred from homology"/>
<accession>P18731</accession>
<keyword id="KW-0238">DNA-binding</keyword>
<keyword id="KW-0479">Metal-binding</keyword>
<keyword id="KW-0539">Nucleus</keyword>
<keyword id="KW-1185">Reference proteome</keyword>
<keyword id="KW-0677">Repeat</keyword>
<keyword id="KW-0804">Transcription</keyword>
<keyword id="KW-0805">Transcription regulation</keyword>
<keyword id="KW-0862">Zinc</keyword>
<keyword id="KW-0863">Zinc-finger</keyword>
<name>ZG62_XENLA</name>
<reference key="1">
    <citation type="journal article" date="1989" name="J. Mol. Biol.">
        <title>Second-order repeats in Xenopus laevis finger proteins.</title>
        <authorList>
            <person name="Nietfeld W."/>
            <person name="El-Baradi T."/>
            <person name="Mentzel H."/>
            <person name="Pieler T."/>
            <person name="Koester M."/>
            <person name="Poeting A."/>
            <person name="Knoechel W."/>
        </authorList>
    </citation>
    <scope>NUCLEOTIDE SEQUENCE</scope>
</reference>
<dbReference type="PIR" id="S06580">
    <property type="entry name" value="S06580"/>
</dbReference>
<dbReference type="SMR" id="P18731"/>
<dbReference type="Proteomes" id="UP000186698">
    <property type="component" value="Unplaced"/>
</dbReference>
<dbReference type="GO" id="GO:0005634">
    <property type="term" value="C:nucleus"/>
    <property type="evidence" value="ECO:0000318"/>
    <property type="project" value="GO_Central"/>
</dbReference>
<dbReference type="GO" id="GO:0003677">
    <property type="term" value="F:DNA binding"/>
    <property type="evidence" value="ECO:0007669"/>
    <property type="project" value="UniProtKB-KW"/>
</dbReference>
<dbReference type="GO" id="GO:0000981">
    <property type="term" value="F:DNA-binding transcription factor activity, RNA polymerase II-specific"/>
    <property type="evidence" value="ECO:0007669"/>
    <property type="project" value="TreeGrafter"/>
</dbReference>
<dbReference type="GO" id="GO:0008270">
    <property type="term" value="F:zinc ion binding"/>
    <property type="evidence" value="ECO:0007669"/>
    <property type="project" value="UniProtKB-KW"/>
</dbReference>
<dbReference type="GO" id="GO:0010468">
    <property type="term" value="P:regulation of gene expression"/>
    <property type="evidence" value="ECO:0000318"/>
    <property type="project" value="GO_Central"/>
</dbReference>
<dbReference type="FunFam" id="3.30.160.60:FF:001715">
    <property type="match status" value="1"/>
</dbReference>
<dbReference type="FunFam" id="3.30.160.60:FF:000557">
    <property type="entry name" value="zinc finger and SCAN domain-containing protein 29"/>
    <property type="match status" value="2"/>
</dbReference>
<dbReference type="FunFam" id="3.30.160.60:FF:000759">
    <property type="entry name" value="zinc finger protein 16"/>
    <property type="match status" value="2"/>
</dbReference>
<dbReference type="FunFam" id="3.30.160.60:FF:001266">
    <property type="entry name" value="Zinc finger protein 662"/>
    <property type="match status" value="1"/>
</dbReference>
<dbReference type="Gene3D" id="3.30.160.60">
    <property type="entry name" value="Classic Zinc Finger"/>
    <property type="match status" value="6"/>
</dbReference>
<dbReference type="InterPro" id="IPR041697">
    <property type="entry name" value="Znf-C2H2_11"/>
</dbReference>
<dbReference type="InterPro" id="IPR036236">
    <property type="entry name" value="Znf_C2H2_sf"/>
</dbReference>
<dbReference type="InterPro" id="IPR013087">
    <property type="entry name" value="Znf_C2H2_type"/>
</dbReference>
<dbReference type="PANTHER" id="PTHR24394">
    <property type="entry name" value="ZINC FINGER PROTEIN"/>
    <property type="match status" value="1"/>
</dbReference>
<dbReference type="PANTHER" id="PTHR24394:SF48">
    <property type="entry name" value="ZINC FINGER PROTEIN 771"/>
    <property type="match status" value="1"/>
</dbReference>
<dbReference type="Pfam" id="PF00096">
    <property type="entry name" value="zf-C2H2"/>
    <property type="match status" value="5"/>
</dbReference>
<dbReference type="Pfam" id="PF16622">
    <property type="entry name" value="zf-C2H2_11"/>
    <property type="match status" value="1"/>
</dbReference>
<dbReference type="SMART" id="SM00355">
    <property type="entry name" value="ZnF_C2H2"/>
    <property type="match status" value="6"/>
</dbReference>
<dbReference type="SUPFAM" id="SSF57667">
    <property type="entry name" value="beta-beta-alpha zinc fingers"/>
    <property type="match status" value="3"/>
</dbReference>
<dbReference type="PROSITE" id="PS00028">
    <property type="entry name" value="ZINC_FINGER_C2H2_1"/>
    <property type="match status" value="6"/>
</dbReference>
<dbReference type="PROSITE" id="PS50157">
    <property type="entry name" value="ZINC_FINGER_C2H2_2"/>
    <property type="match status" value="6"/>
</dbReference>
<comment type="function">
    <text>May be involved in transcriptional regulation.</text>
</comment>
<comment type="subcellular location">
    <subcellularLocation>
        <location evidence="2">Nucleus</location>
    </subcellularLocation>
</comment>
<comment type="similarity">
    <text evidence="2">Belongs to the krueppel C2H2-type zinc-finger protein family.</text>
</comment>
<feature type="chain" id="PRO_0000047803" description="Gastrula zinc finger protein XlCGF62.1">
    <location>
        <begin position="1" status="less than"/>
        <end position="169" status="greater than"/>
    </location>
</feature>
<feature type="zinc finger region" description="C2H2-type 1" evidence="1">
    <location>
        <begin position="6"/>
        <end position="28"/>
    </location>
</feature>
<feature type="zinc finger region" description="C2H2-type 2" evidence="1">
    <location>
        <begin position="34"/>
        <end position="56"/>
    </location>
</feature>
<feature type="zinc finger region" description="C2H2-type 3" evidence="1">
    <location>
        <begin position="62"/>
        <end position="84"/>
    </location>
</feature>
<feature type="zinc finger region" description="C2H2-type 4" evidence="1">
    <location>
        <begin position="90"/>
        <end position="113"/>
    </location>
</feature>
<feature type="zinc finger region" description="C2H2-type 5" evidence="1">
    <location>
        <begin position="119"/>
        <end position="141"/>
    </location>
</feature>
<feature type="zinc finger region" description="C2H2-type 6" evidence="1">
    <location>
        <begin position="147"/>
        <end position="169"/>
    </location>
</feature>
<feature type="non-terminal residue">
    <location>
        <position position="1"/>
    </location>
</feature>
<feature type="non-terminal residue">
    <location>
        <position position="169"/>
    </location>
</feature>
<evidence type="ECO:0000255" key="1">
    <source>
        <dbReference type="PROSITE-ProRule" id="PRU00042"/>
    </source>
</evidence>
<evidence type="ECO:0000305" key="2"/>
<protein>
    <recommendedName>
        <fullName>Gastrula zinc finger protein XlCGF62.1</fullName>
    </recommendedName>
</protein>
<organism>
    <name type="scientific">Xenopus laevis</name>
    <name type="common">African clawed frog</name>
    <dbReference type="NCBI Taxonomy" id="8355"/>
    <lineage>
        <taxon>Eukaryota</taxon>
        <taxon>Metazoa</taxon>
        <taxon>Chordata</taxon>
        <taxon>Craniata</taxon>
        <taxon>Vertebrata</taxon>
        <taxon>Euteleostomi</taxon>
        <taxon>Amphibia</taxon>
        <taxon>Batrachia</taxon>
        <taxon>Anura</taxon>
        <taxon>Pipoidea</taxon>
        <taxon>Pipidae</taxon>
        <taxon>Xenopodinae</taxon>
        <taxon>Xenopus</taxon>
        <taxon>Xenopus</taxon>
    </lineage>
</organism>
<sequence length="169" mass="19525">IPEKPFICTECGKCFSEKRTLKHHIRTHTGEKPFICTDCGKCFSFEICLNRHYKTHTRERPFICTECGKSFSDKSRLRVHHRSHTGEKPFTCTDCGKCFSVKSILNHHRQAIHSGEKPFICTECGKGFASKHYLHGHKRTHTGEKPFVCTECGKGFASNYYLHVHKRTH</sequence>